<comment type="function">
    <text evidence="1">Non-essential, abundant cell division factor that is required for proper Z-ring formation. It is recruited early to the divisome by direct interaction with FtsZ, stimulating Z-ring assembly and thereby promoting cell division earlier in the cell cycle. Its recruitment to the Z-ring requires functional FtsA or ZipA.</text>
</comment>
<comment type="subunit">
    <text evidence="1">Homodimer. The ends of the coiled-coil dimer bind to each other, forming polymers. Interacts with FtsZ.</text>
</comment>
<comment type="subcellular location">
    <subcellularLocation>
        <location>Cytoplasm</location>
    </subcellularLocation>
    <text evidence="1">Localizes to the septum at mid-cell, in a FtsZ-like pattern.</text>
</comment>
<comment type="similarity">
    <text evidence="1">Belongs to the ZapB family.</text>
</comment>
<accession>Q57HC9</accession>
<protein>
    <recommendedName>
        <fullName evidence="1">Cell division protein ZapB</fullName>
    </recommendedName>
</protein>
<organism>
    <name type="scientific">Salmonella choleraesuis (strain SC-B67)</name>
    <dbReference type="NCBI Taxonomy" id="321314"/>
    <lineage>
        <taxon>Bacteria</taxon>
        <taxon>Pseudomonadati</taxon>
        <taxon>Pseudomonadota</taxon>
        <taxon>Gammaproteobacteria</taxon>
        <taxon>Enterobacterales</taxon>
        <taxon>Enterobacteriaceae</taxon>
        <taxon>Salmonella</taxon>
    </lineage>
</organism>
<proteinExistence type="inferred from homology"/>
<keyword id="KW-0131">Cell cycle</keyword>
<keyword id="KW-0132">Cell division</keyword>
<keyword id="KW-0175">Coiled coil</keyword>
<keyword id="KW-0963">Cytoplasm</keyword>
<keyword id="KW-0717">Septation</keyword>
<feature type="chain" id="PRO_0000333915" description="Cell division protein ZapB">
    <location>
        <begin position="1"/>
        <end position="79"/>
    </location>
</feature>
<feature type="region of interest" description="Disordered" evidence="2">
    <location>
        <begin position="36"/>
        <end position="63"/>
    </location>
</feature>
<feature type="coiled-coil region" evidence="1">
    <location>
        <begin position="3"/>
        <end position="79"/>
    </location>
</feature>
<feature type="compositionally biased region" description="Polar residues" evidence="2">
    <location>
        <begin position="36"/>
        <end position="45"/>
    </location>
</feature>
<feature type="compositionally biased region" description="Basic and acidic residues" evidence="2">
    <location>
        <begin position="46"/>
        <end position="57"/>
    </location>
</feature>
<gene>
    <name evidence="1" type="primary">zapB</name>
    <name type="ordered locus">SCH_3977</name>
</gene>
<name>ZAPB_SALCH</name>
<dbReference type="EMBL" id="AE017220">
    <property type="protein sequence ID" value="AAX67883.1"/>
    <property type="molecule type" value="Genomic_DNA"/>
</dbReference>
<dbReference type="RefSeq" id="WP_000051370.1">
    <property type="nucleotide sequence ID" value="NC_006905.1"/>
</dbReference>
<dbReference type="SMR" id="Q57HC9"/>
<dbReference type="KEGG" id="sec:SCH_3977"/>
<dbReference type="HOGENOM" id="CLU_171174_2_0_6"/>
<dbReference type="Proteomes" id="UP000000538">
    <property type="component" value="Chromosome"/>
</dbReference>
<dbReference type="GO" id="GO:0005737">
    <property type="term" value="C:cytoplasm"/>
    <property type="evidence" value="ECO:0007669"/>
    <property type="project" value="UniProtKB-SubCell"/>
</dbReference>
<dbReference type="GO" id="GO:0000917">
    <property type="term" value="P:division septum assembly"/>
    <property type="evidence" value="ECO:0007669"/>
    <property type="project" value="UniProtKB-KW"/>
</dbReference>
<dbReference type="GO" id="GO:0043093">
    <property type="term" value="P:FtsZ-dependent cytokinesis"/>
    <property type="evidence" value="ECO:0007669"/>
    <property type="project" value="UniProtKB-UniRule"/>
</dbReference>
<dbReference type="FunFam" id="1.20.5.340:FF:000014">
    <property type="entry name" value="Cell division protein ZapB"/>
    <property type="match status" value="1"/>
</dbReference>
<dbReference type="Gene3D" id="1.20.5.340">
    <property type="match status" value="1"/>
</dbReference>
<dbReference type="HAMAP" id="MF_01196">
    <property type="entry name" value="ZapB"/>
    <property type="match status" value="1"/>
</dbReference>
<dbReference type="InterPro" id="IPR009252">
    <property type="entry name" value="Cell_div_ZapB"/>
</dbReference>
<dbReference type="NCBIfam" id="NF011951">
    <property type="entry name" value="PRK15422.1"/>
    <property type="match status" value="1"/>
</dbReference>
<dbReference type="Pfam" id="PF06005">
    <property type="entry name" value="ZapB"/>
    <property type="match status" value="1"/>
</dbReference>
<evidence type="ECO:0000255" key="1">
    <source>
        <dbReference type="HAMAP-Rule" id="MF_01196"/>
    </source>
</evidence>
<evidence type="ECO:0000256" key="2">
    <source>
        <dbReference type="SAM" id="MobiDB-lite"/>
    </source>
</evidence>
<sequence>MSLEVFEKLEAKVQQAIDTITLLQMEIEELKEKNNSLTQEVQSAQHQREELERENNSLKEQQSGWQERLQALLGRMEEV</sequence>
<reference key="1">
    <citation type="journal article" date="2005" name="Nucleic Acids Res.">
        <title>The genome sequence of Salmonella enterica serovar Choleraesuis, a highly invasive and resistant zoonotic pathogen.</title>
        <authorList>
            <person name="Chiu C.-H."/>
            <person name="Tang P."/>
            <person name="Chu C."/>
            <person name="Hu S."/>
            <person name="Bao Q."/>
            <person name="Yu J."/>
            <person name="Chou Y.-Y."/>
            <person name="Wang H.-S."/>
            <person name="Lee Y.-S."/>
        </authorList>
    </citation>
    <scope>NUCLEOTIDE SEQUENCE [LARGE SCALE GENOMIC DNA]</scope>
    <source>
        <strain>SC-B67</strain>
    </source>
</reference>